<dbReference type="EC" id="1.14.19.22" evidence="7"/>
<dbReference type="EC" id="1.14.19.6" evidence="14"/>
<dbReference type="EMBL" id="L26296">
    <property type="protein sequence ID" value="AAA32782.1"/>
    <property type="molecule type" value="mRNA"/>
</dbReference>
<dbReference type="EMBL" id="AP002063">
    <property type="protein sequence ID" value="BAB01960.1"/>
    <property type="molecule type" value="Genomic_DNA"/>
</dbReference>
<dbReference type="EMBL" id="AC069473">
    <property type="protein sequence ID" value="AAG51042.1"/>
    <property type="molecule type" value="Genomic_DNA"/>
</dbReference>
<dbReference type="EMBL" id="CP002686">
    <property type="protein sequence ID" value="AEE75152.1"/>
    <property type="molecule type" value="Genomic_DNA"/>
</dbReference>
<dbReference type="EMBL" id="CP002686">
    <property type="protein sequence ID" value="AEE75153.1"/>
    <property type="molecule type" value="Genomic_DNA"/>
</dbReference>
<dbReference type="EMBL" id="AY039572">
    <property type="protein sequence ID" value="AAK62627.1"/>
    <property type="molecule type" value="mRNA"/>
</dbReference>
<dbReference type="EMBL" id="AY142057">
    <property type="protein sequence ID" value="AAM98321.1"/>
    <property type="molecule type" value="mRNA"/>
</dbReference>
<dbReference type="EMBL" id="AY084545">
    <property type="protein sequence ID" value="AAM61113.1"/>
    <property type="molecule type" value="mRNA"/>
</dbReference>
<dbReference type="EMBL" id="DQ518270">
    <property type="protein sequence ID" value="ABF70287.1"/>
    <property type="molecule type" value="Genomic_DNA"/>
</dbReference>
<dbReference type="RefSeq" id="NP_001319529.1">
    <property type="nucleotide sequence ID" value="NM_001337975.1"/>
</dbReference>
<dbReference type="RefSeq" id="NP_187819.1">
    <property type="nucleotide sequence ID" value="NM_112047.4"/>
</dbReference>
<dbReference type="SMR" id="P46313"/>
<dbReference type="BioGRID" id="5721">
    <property type="interactions" value="3"/>
</dbReference>
<dbReference type="FunCoup" id="P46313">
    <property type="interactions" value="200"/>
</dbReference>
<dbReference type="STRING" id="3702.P46313"/>
<dbReference type="SwissLipids" id="SLP:000000808"/>
<dbReference type="iPTMnet" id="P46313"/>
<dbReference type="PaxDb" id="3702-AT3G12120.1"/>
<dbReference type="ProteomicsDB" id="230847"/>
<dbReference type="EnsemblPlants" id="AT3G12120.1">
    <property type="protein sequence ID" value="AT3G12120.1"/>
    <property type="gene ID" value="AT3G12120"/>
</dbReference>
<dbReference type="EnsemblPlants" id="AT3G12120.2">
    <property type="protein sequence ID" value="AT3G12120.2"/>
    <property type="gene ID" value="AT3G12120"/>
</dbReference>
<dbReference type="GeneID" id="820387"/>
<dbReference type="Gramene" id="AT3G12120.1">
    <property type="protein sequence ID" value="AT3G12120.1"/>
    <property type="gene ID" value="AT3G12120"/>
</dbReference>
<dbReference type="Gramene" id="AT3G12120.2">
    <property type="protein sequence ID" value="AT3G12120.2"/>
    <property type="gene ID" value="AT3G12120"/>
</dbReference>
<dbReference type="KEGG" id="ath:AT3G12120"/>
<dbReference type="Araport" id="AT3G12120"/>
<dbReference type="TAIR" id="AT3G12120">
    <property type="gene designation" value="FAD2"/>
</dbReference>
<dbReference type="eggNOG" id="ENOG502QQNB">
    <property type="taxonomic scope" value="Eukaryota"/>
</dbReference>
<dbReference type="HOGENOM" id="CLU_033094_0_1_1"/>
<dbReference type="InParanoid" id="P46313"/>
<dbReference type="OMA" id="DTVFVPW"/>
<dbReference type="OrthoDB" id="1461976at2759"/>
<dbReference type="PhylomeDB" id="P46313"/>
<dbReference type="BioCyc" id="MetaCyc:AT3G12120-MONOMER"/>
<dbReference type="BRENDA" id="1.14.19.22">
    <property type="organism ID" value="399"/>
</dbReference>
<dbReference type="UniPathway" id="UPA00658"/>
<dbReference type="PRO" id="PR:P46313"/>
<dbReference type="Proteomes" id="UP000006548">
    <property type="component" value="Chromosome 3"/>
</dbReference>
<dbReference type="ExpressionAtlas" id="P46313">
    <property type="expression patterns" value="baseline and differential"/>
</dbReference>
<dbReference type="GO" id="GO:0005789">
    <property type="term" value="C:endoplasmic reticulum membrane"/>
    <property type="evidence" value="ECO:0007669"/>
    <property type="project" value="UniProtKB-SubCell"/>
</dbReference>
<dbReference type="GO" id="GO:0102985">
    <property type="term" value="F:acyl-CoA (9+3)-desaturase activity"/>
    <property type="evidence" value="ECO:0007669"/>
    <property type="project" value="UniProtKB-EC"/>
</dbReference>
<dbReference type="GO" id="GO:0050184">
    <property type="term" value="F:acyl-lipid omega-6 desaturase (cytochrome b5) activity"/>
    <property type="evidence" value="ECO:0007669"/>
    <property type="project" value="UniProtKB-EC"/>
</dbReference>
<dbReference type="GO" id="GO:0045485">
    <property type="term" value="F:omega-6 fatty acid desaturase activity"/>
    <property type="evidence" value="ECO:0000314"/>
    <property type="project" value="TAIR"/>
</dbReference>
<dbReference type="GO" id="GO:0006636">
    <property type="term" value="P:unsaturated fatty acid biosynthetic process"/>
    <property type="evidence" value="ECO:0007669"/>
    <property type="project" value="UniProtKB-UniPathway"/>
</dbReference>
<dbReference type="CDD" id="cd03507">
    <property type="entry name" value="Delta12-FADS-like"/>
    <property type="match status" value="1"/>
</dbReference>
<dbReference type="InterPro" id="IPR005804">
    <property type="entry name" value="FA_desaturase_dom"/>
</dbReference>
<dbReference type="InterPro" id="IPR021863">
    <property type="entry name" value="FAS_N"/>
</dbReference>
<dbReference type="InterPro" id="IPR012171">
    <property type="entry name" value="Fatty_acid_desaturase"/>
</dbReference>
<dbReference type="PANTHER" id="PTHR32100">
    <property type="entry name" value="OMEGA-6 FATTY ACID DESATURASE, CHLOROPLASTIC"/>
    <property type="match status" value="1"/>
</dbReference>
<dbReference type="Pfam" id="PF11960">
    <property type="entry name" value="DUF3474"/>
    <property type="match status" value="1"/>
</dbReference>
<dbReference type="Pfam" id="PF00487">
    <property type="entry name" value="FA_desaturase"/>
    <property type="match status" value="1"/>
</dbReference>
<comment type="function">
    <text evidence="3 4 5 7 8 11 13 14">ER (microsomal) omega-6 fatty acid desaturase introduces the second double bond in the biosynthesis of 18:3 fatty acids, important constituents of plant membranes (PubMed:14593172, PubMed:7907506). Delta(12)-desaturase with regioselectivity determined by the double bond (delta(9) position) and carboxyl group of the substrate. Can use both 16:1 and 18:1 fatty acids as substrates (PubMed:8685264). It is thought to use cytochrome b5 as an electron donor and to act on fatty acids esterified to phosphatidylcholine (PC) and, possibly, other phospholipids (PubMed:14593172, PubMed:1730697, PubMed:7907506). Very low constitutive hydroxylation activity (PubMed:11864983). Required for desaturation of fatty acids present in extraplastidial membranes, including mitochondria (PubMed:11104757, PubMed:17507388). Required for salt tolerance during seed germination and early seedling growth (PubMed:22279586).</text>
</comment>
<comment type="catalytic activity">
    <reaction evidence="14">
        <text>(9Z)-octadecenoyl-CoA + 2 Fe(II)-[cytochrome b5] + O2 + 2 H(+) = (9Z,12Z)-octadecadienoyl-CoA + 2 Fe(III)-[cytochrome b5] + 2 H2O</text>
        <dbReference type="Rhea" id="RHEA:25856"/>
        <dbReference type="Rhea" id="RHEA-COMP:10438"/>
        <dbReference type="Rhea" id="RHEA-COMP:10439"/>
        <dbReference type="ChEBI" id="CHEBI:15377"/>
        <dbReference type="ChEBI" id="CHEBI:15378"/>
        <dbReference type="ChEBI" id="CHEBI:15379"/>
        <dbReference type="ChEBI" id="CHEBI:29033"/>
        <dbReference type="ChEBI" id="CHEBI:29034"/>
        <dbReference type="ChEBI" id="CHEBI:57383"/>
        <dbReference type="ChEBI" id="CHEBI:57387"/>
        <dbReference type="EC" id="1.14.19.6"/>
    </reaction>
</comment>
<comment type="catalytic activity">
    <reaction evidence="14">
        <text>(9Z)-hexadecenoyl-CoA + 2 Fe(II)-[cytochrome b5] + O2 + 2 H(+) = (9Z,12Z)-hexadecadienoyl-CoA + 2 Fe(III)-[cytochrome b5] + 2 H2O</text>
        <dbReference type="Rhea" id="RHEA:45096"/>
        <dbReference type="Rhea" id="RHEA-COMP:10438"/>
        <dbReference type="Rhea" id="RHEA-COMP:10439"/>
        <dbReference type="ChEBI" id="CHEBI:15377"/>
        <dbReference type="ChEBI" id="CHEBI:15378"/>
        <dbReference type="ChEBI" id="CHEBI:15379"/>
        <dbReference type="ChEBI" id="CHEBI:29033"/>
        <dbReference type="ChEBI" id="CHEBI:29034"/>
        <dbReference type="ChEBI" id="CHEBI:61540"/>
        <dbReference type="ChEBI" id="CHEBI:76552"/>
        <dbReference type="EC" id="1.14.19.6"/>
    </reaction>
</comment>
<comment type="catalytic activity">
    <reaction evidence="7">
        <text>a (9Z)-octadecenoyl-containing glycerolipid + 2 Fe(II)-[cytochrome b5] + O2 + 2 H(+) = a (9Z,12Z)-octadecadienoyl-containing glycerolipid + 2 Fe(III)-[cytochrome b5] + 2 H2O</text>
        <dbReference type="Rhea" id="RHEA:46332"/>
        <dbReference type="Rhea" id="RHEA-COMP:10438"/>
        <dbReference type="Rhea" id="RHEA-COMP:10439"/>
        <dbReference type="ChEBI" id="CHEBI:15377"/>
        <dbReference type="ChEBI" id="CHEBI:15378"/>
        <dbReference type="ChEBI" id="CHEBI:15379"/>
        <dbReference type="ChEBI" id="CHEBI:29033"/>
        <dbReference type="ChEBI" id="CHEBI:29034"/>
        <dbReference type="ChEBI" id="CHEBI:88240"/>
        <dbReference type="ChEBI" id="CHEBI:88351"/>
        <dbReference type="EC" id="1.14.19.22"/>
    </reaction>
</comment>
<comment type="catalytic activity">
    <reaction evidence="10">
        <text>(9Z)-octadecenoyl-CoA + AH2 + O2 = (9Z,12Z)-octadecadienoyl-CoA + A + 2 H2O</text>
        <dbReference type="Rhea" id="RHEA:36863"/>
        <dbReference type="ChEBI" id="CHEBI:13193"/>
        <dbReference type="ChEBI" id="CHEBI:15377"/>
        <dbReference type="ChEBI" id="CHEBI:15379"/>
        <dbReference type="ChEBI" id="CHEBI:17499"/>
        <dbReference type="ChEBI" id="CHEBI:57383"/>
        <dbReference type="ChEBI" id="CHEBI:57387"/>
    </reaction>
    <physiologicalReaction direction="left-to-right" evidence="10">
        <dbReference type="Rhea" id="RHEA:36864"/>
    </physiologicalReaction>
</comment>
<comment type="catalytic activity">
    <reaction evidence="10">
        <text>(9Z)-hexadecenoyl-CoA + AH2 + O2 = (9Z,12Z)-hexadecadienoyl-CoA + A + 2 H2O</text>
        <dbReference type="Rhea" id="RHEA:39671"/>
        <dbReference type="ChEBI" id="CHEBI:13193"/>
        <dbReference type="ChEBI" id="CHEBI:15377"/>
        <dbReference type="ChEBI" id="CHEBI:15379"/>
        <dbReference type="ChEBI" id="CHEBI:17499"/>
        <dbReference type="ChEBI" id="CHEBI:61540"/>
        <dbReference type="ChEBI" id="CHEBI:76552"/>
    </reaction>
    <physiologicalReaction direction="left-to-right" evidence="10">
        <dbReference type="Rhea" id="RHEA:39672"/>
    </physiologicalReaction>
</comment>
<comment type="catalytic activity">
    <reaction evidence="10">
        <text>(9Z)-tetradecenoyl-CoA + 2 Fe(II)-[cytochrome b5] + O2 + 2 H(+) = (9Z,12Z)-tetradecadienoyl-CoA + 2 Fe(III)-[cytochrome b5] + 2 H2O</text>
        <dbReference type="Rhea" id="RHEA:42176"/>
        <dbReference type="Rhea" id="RHEA-COMP:10438"/>
        <dbReference type="Rhea" id="RHEA-COMP:10439"/>
        <dbReference type="ChEBI" id="CHEBI:15377"/>
        <dbReference type="ChEBI" id="CHEBI:15378"/>
        <dbReference type="ChEBI" id="CHEBI:15379"/>
        <dbReference type="ChEBI" id="CHEBI:29033"/>
        <dbReference type="ChEBI" id="CHEBI:29034"/>
        <dbReference type="ChEBI" id="CHEBI:65060"/>
        <dbReference type="ChEBI" id="CHEBI:78680"/>
    </reaction>
    <physiologicalReaction direction="left-to-right" evidence="10">
        <dbReference type="Rhea" id="RHEA:42177"/>
    </physiologicalReaction>
</comment>
<comment type="catalytic activity">
    <reaction evidence="10">
        <text>(9Z)-pentadecenoyl-CoA + 2 Fe(II)-[cytochrome b5] + O2 + 2 H(+) = (9Z,12Z)-pentadecadienoyl-CoA + 2 Fe(III)-[cytochrome b5] + 2 H2O</text>
        <dbReference type="Rhea" id="RHEA:42192"/>
        <dbReference type="Rhea" id="RHEA-COMP:10438"/>
        <dbReference type="Rhea" id="RHEA-COMP:10439"/>
        <dbReference type="ChEBI" id="CHEBI:15377"/>
        <dbReference type="ChEBI" id="CHEBI:15378"/>
        <dbReference type="ChEBI" id="CHEBI:15379"/>
        <dbReference type="ChEBI" id="CHEBI:29033"/>
        <dbReference type="ChEBI" id="CHEBI:29034"/>
        <dbReference type="ChEBI" id="CHEBI:74310"/>
        <dbReference type="ChEBI" id="CHEBI:78684"/>
    </reaction>
    <physiologicalReaction direction="left-to-right" evidence="10">
        <dbReference type="Rhea" id="RHEA:42193"/>
    </physiologicalReaction>
</comment>
<comment type="catalytic activity">
    <reaction evidence="10">
        <text>(9Z)-heptadecenoyl-CoA + 2 Fe(II)-[cytochrome b5] + O2 + 2 H(+) = (9Z,12Z)-heptadecadienoyl-CoA + 2 Fe(III)-[cytochrome b5] + 2 H2O</text>
        <dbReference type="Rhea" id="RHEA:42196"/>
        <dbReference type="Rhea" id="RHEA-COMP:10438"/>
        <dbReference type="Rhea" id="RHEA-COMP:10439"/>
        <dbReference type="ChEBI" id="CHEBI:15377"/>
        <dbReference type="ChEBI" id="CHEBI:15378"/>
        <dbReference type="ChEBI" id="CHEBI:15379"/>
        <dbReference type="ChEBI" id="CHEBI:29033"/>
        <dbReference type="ChEBI" id="CHEBI:29034"/>
        <dbReference type="ChEBI" id="CHEBI:74308"/>
        <dbReference type="ChEBI" id="CHEBI:78690"/>
    </reaction>
    <physiologicalReaction direction="left-to-right" evidence="10">
        <dbReference type="Rhea" id="RHEA:42197"/>
    </physiologicalReaction>
</comment>
<comment type="pathway">
    <text>Lipid metabolism; polyunsaturated fatty acid biosynthesis.</text>
</comment>
<comment type="subunit">
    <text evidence="12">Homo- and heterodimer (PubMed:24811169). Interacts with FAD3 but not with FAD6 (PubMed:24811169). FAD2-FAD3 heterodimers can form a metabolic channel in which 18:1-PC is converted to 18:3-PC without releasing a free 18:2-PC intermediate (PubMed:24811169).</text>
</comment>
<comment type="subcellular location">
    <subcellularLocation>
        <location evidence="6 18">Endoplasmic reticulum membrane</location>
        <topology evidence="1">Multi-pass membrane protein</topology>
    </subcellularLocation>
    <subcellularLocation>
        <location evidence="7">Microsome membrane</location>
        <topology evidence="1">Multi-pass membrane protein</topology>
    </subcellularLocation>
</comment>
<comment type="tissue specificity">
    <text evidence="11 13">Expressed in shoots and roots (PubMed:22279586, PubMed:7907506). Expressed in leaves, stems, flowers and siliques (PubMed:22279586).</text>
</comment>
<comment type="induction">
    <text evidence="11 13">Up-regulated by osmotic stress (PubMed:22279586). Not regulated by cold stress (PubMed:7907506).</text>
</comment>
<comment type="domain">
    <text evidence="6 18">The histidine box domains may contain the active site and/or be involved in metal ion binding (Probable). The C-terminal sequence (-YNNKL) is necessary and sufficient for maintaining localization in the endoplasmic reticulum (PubMed:14690501).</text>
</comment>
<comment type="disruption phenotype">
    <text evidence="3 8 11">Enhancement of both microviscosity and lipid/protein ratio of mitochondrial membranes, which in turn were responsible for the change in lateral mobility of lipids and for bioenergetic parameter modifications (PubMed:11104757). Increased membrane rigidity and cold sensitivity (PubMed:17507388). Hypersensitivity to salt or osmotic stress (PubMed:22279586).</text>
</comment>
<comment type="miscellaneous">
    <text evidence="4">Introduction of Ile at position 146 or 324 has a dominant role in specifying hydroxylation activity.</text>
</comment>
<comment type="similarity">
    <text evidence="17">Belongs to the fatty acid desaturase type 1 family.</text>
</comment>
<protein>
    <recommendedName>
        <fullName evidence="16">Delta(12)-fatty-acid desaturase</fullName>
        <shortName evidence="16">Fatty acid desaturase 2</shortName>
        <ecNumber evidence="7">1.14.19.22</ecNumber>
        <ecNumber evidence="14">1.14.19.6</ecNumber>
    </recommendedName>
    <alternativeName>
        <fullName evidence="16">Omega-6 fatty acid desaturase, endoplasmic reticulum</fullName>
    </alternativeName>
</protein>
<reference key="1">
    <citation type="journal article" date="1994" name="Plant Cell">
        <title>Arabidopsis FAD2 gene encodes the enzyme that is essential for polyunsaturated lipid synthesis.</title>
        <authorList>
            <person name="Okuley J."/>
            <person name="Lightner J."/>
            <person name="Feldmann K.A."/>
            <person name="Yadav N."/>
            <person name="Lark E."/>
            <person name="Browse J."/>
        </authorList>
    </citation>
    <scope>NUCLEOTIDE SEQUENCE [MRNA]</scope>
    <scope>FUNCTION</scope>
    <scope>INDUCTION BY COLD</scope>
    <scope>TISSUE SPECIFICITY</scope>
</reference>
<reference key="2">
    <citation type="journal article" date="2000" name="DNA Res.">
        <title>Structural analysis of Arabidopsis thaliana chromosome 3. II. Sequence features of the 4,251,695 bp regions covered by 90 P1, TAC and BAC clones.</title>
        <authorList>
            <person name="Kaneko T."/>
            <person name="Katoh T."/>
            <person name="Sato S."/>
            <person name="Nakamura Y."/>
            <person name="Asamizu E."/>
            <person name="Tabata S."/>
        </authorList>
    </citation>
    <scope>NUCLEOTIDE SEQUENCE [LARGE SCALE GENOMIC DNA]</scope>
    <source>
        <strain>cv. Columbia</strain>
    </source>
</reference>
<reference key="3">
    <citation type="journal article" date="2000" name="Nature">
        <title>Sequence and analysis of chromosome 3 of the plant Arabidopsis thaliana.</title>
        <authorList>
            <person name="Salanoubat M."/>
            <person name="Lemcke K."/>
            <person name="Rieger M."/>
            <person name="Ansorge W."/>
            <person name="Unseld M."/>
            <person name="Fartmann B."/>
            <person name="Valle G."/>
            <person name="Bloecker H."/>
            <person name="Perez-Alonso M."/>
            <person name="Obermaier B."/>
            <person name="Delseny M."/>
            <person name="Boutry M."/>
            <person name="Grivell L.A."/>
            <person name="Mache R."/>
            <person name="Puigdomenech P."/>
            <person name="De Simone V."/>
            <person name="Choisne N."/>
            <person name="Artiguenave F."/>
            <person name="Robert C."/>
            <person name="Brottier P."/>
            <person name="Wincker P."/>
            <person name="Cattolico L."/>
            <person name="Weissenbach J."/>
            <person name="Saurin W."/>
            <person name="Quetier F."/>
            <person name="Schaefer M."/>
            <person name="Mueller-Auer S."/>
            <person name="Gabel C."/>
            <person name="Fuchs M."/>
            <person name="Benes V."/>
            <person name="Wurmbach E."/>
            <person name="Drzonek H."/>
            <person name="Erfle H."/>
            <person name="Jordan N."/>
            <person name="Bangert S."/>
            <person name="Wiedelmann R."/>
            <person name="Kranz H."/>
            <person name="Voss H."/>
            <person name="Holland R."/>
            <person name="Brandt P."/>
            <person name="Nyakatura G."/>
            <person name="Vezzi A."/>
            <person name="D'Angelo M."/>
            <person name="Pallavicini A."/>
            <person name="Toppo S."/>
            <person name="Simionati B."/>
            <person name="Conrad A."/>
            <person name="Hornischer K."/>
            <person name="Kauer G."/>
            <person name="Loehnert T.-H."/>
            <person name="Nordsiek G."/>
            <person name="Reichelt J."/>
            <person name="Scharfe M."/>
            <person name="Schoen O."/>
            <person name="Bargues M."/>
            <person name="Terol J."/>
            <person name="Climent J."/>
            <person name="Navarro P."/>
            <person name="Collado C."/>
            <person name="Perez-Perez A."/>
            <person name="Ottenwaelder B."/>
            <person name="Duchemin D."/>
            <person name="Cooke R."/>
            <person name="Laudie M."/>
            <person name="Berger-Llauro C."/>
            <person name="Purnelle B."/>
            <person name="Masuy D."/>
            <person name="de Haan M."/>
            <person name="Maarse A.C."/>
            <person name="Alcaraz J.-P."/>
            <person name="Cottet A."/>
            <person name="Casacuberta E."/>
            <person name="Monfort A."/>
            <person name="Argiriou A."/>
            <person name="Flores M."/>
            <person name="Liguori R."/>
            <person name="Vitale D."/>
            <person name="Mannhaupt G."/>
            <person name="Haase D."/>
            <person name="Schoof H."/>
            <person name="Rudd S."/>
            <person name="Zaccaria P."/>
            <person name="Mewes H.-W."/>
            <person name="Mayer K.F.X."/>
            <person name="Kaul S."/>
            <person name="Town C.D."/>
            <person name="Koo H.L."/>
            <person name="Tallon L.J."/>
            <person name="Jenkins J."/>
            <person name="Rooney T."/>
            <person name="Rizzo M."/>
            <person name="Walts A."/>
            <person name="Utterback T."/>
            <person name="Fujii C.Y."/>
            <person name="Shea T.P."/>
            <person name="Creasy T.H."/>
            <person name="Haas B."/>
            <person name="Maiti R."/>
            <person name="Wu D."/>
            <person name="Peterson J."/>
            <person name="Van Aken S."/>
            <person name="Pai G."/>
            <person name="Militscher J."/>
            <person name="Sellers P."/>
            <person name="Gill J.E."/>
            <person name="Feldblyum T.V."/>
            <person name="Preuss D."/>
            <person name="Lin X."/>
            <person name="Nierman W.C."/>
            <person name="Salzberg S.L."/>
            <person name="White O."/>
            <person name="Venter J.C."/>
            <person name="Fraser C.M."/>
            <person name="Kaneko T."/>
            <person name="Nakamura Y."/>
            <person name="Sato S."/>
            <person name="Kato T."/>
            <person name="Asamizu E."/>
            <person name="Sasamoto S."/>
            <person name="Kimura T."/>
            <person name="Idesawa K."/>
            <person name="Kawashima K."/>
            <person name="Kishida Y."/>
            <person name="Kiyokawa C."/>
            <person name="Kohara M."/>
            <person name="Matsumoto M."/>
            <person name="Matsuno A."/>
            <person name="Muraki A."/>
            <person name="Nakayama S."/>
            <person name="Nakazaki N."/>
            <person name="Shinpo S."/>
            <person name="Takeuchi C."/>
            <person name="Wada T."/>
            <person name="Watanabe A."/>
            <person name="Yamada M."/>
            <person name="Yasuda M."/>
            <person name="Tabata S."/>
        </authorList>
    </citation>
    <scope>NUCLEOTIDE SEQUENCE [LARGE SCALE GENOMIC DNA]</scope>
    <source>
        <strain>cv. Columbia</strain>
    </source>
</reference>
<reference key="4">
    <citation type="journal article" date="2017" name="Plant J.">
        <title>Araport11: a complete reannotation of the Arabidopsis thaliana reference genome.</title>
        <authorList>
            <person name="Cheng C.Y."/>
            <person name="Krishnakumar V."/>
            <person name="Chan A.P."/>
            <person name="Thibaud-Nissen F."/>
            <person name="Schobel S."/>
            <person name="Town C.D."/>
        </authorList>
    </citation>
    <scope>GENOME REANNOTATION</scope>
    <source>
        <strain>cv. Columbia</strain>
    </source>
</reference>
<reference key="5">
    <citation type="journal article" date="2003" name="Science">
        <title>Empirical analysis of transcriptional activity in the Arabidopsis genome.</title>
        <authorList>
            <person name="Yamada K."/>
            <person name="Lim J."/>
            <person name="Dale J.M."/>
            <person name="Chen H."/>
            <person name="Shinn P."/>
            <person name="Palm C.J."/>
            <person name="Southwick A.M."/>
            <person name="Wu H.C."/>
            <person name="Kim C.J."/>
            <person name="Nguyen M."/>
            <person name="Pham P.K."/>
            <person name="Cheuk R.F."/>
            <person name="Karlin-Newmann G."/>
            <person name="Liu S.X."/>
            <person name="Lam B."/>
            <person name="Sakano H."/>
            <person name="Wu T."/>
            <person name="Yu G."/>
            <person name="Miranda M."/>
            <person name="Quach H.L."/>
            <person name="Tripp M."/>
            <person name="Chang C.H."/>
            <person name="Lee J.M."/>
            <person name="Toriumi M.J."/>
            <person name="Chan M.M."/>
            <person name="Tang C.C."/>
            <person name="Onodera C.S."/>
            <person name="Deng J.M."/>
            <person name="Akiyama K."/>
            <person name="Ansari Y."/>
            <person name="Arakawa T."/>
            <person name="Banh J."/>
            <person name="Banno F."/>
            <person name="Bowser L."/>
            <person name="Brooks S.Y."/>
            <person name="Carninci P."/>
            <person name="Chao Q."/>
            <person name="Choy N."/>
            <person name="Enju A."/>
            <person name="Goldsmith A.D."/>
            <person name="Gurjal M."/>
            <person name="Hansen N.F."/>
            <person name="Hayashizaki Y."/>
            <person name="Johnson-Hopson C."/>
            <person name="Hsuan V.W."/>
            <person name="Iida K."/>
            <person name="Karnes M."/>
            <person name="Khan S."/>
            <person name="Koesema E."/>
            <person name="Ishida J."/>
            <person name="Jiang P.X."/>
            <person name="Jones T."/>
            <person name="Kawai J."/>
            <person name="Kamiya A."/>
            <person name="Meyers C."/>
            <person name="Nakajima M."/>
            <person name="Narusaka M."/>
            <person name="Seki M."/>
            <person name="Sakurai T."/>
            <person name="Satou M."/>
            <person name="Tamse R."/>
            <person name="Vaysberg M."/>
            <person name="Wallender E.K."/>
            <person name="Wong C."/>
            <person name="Yamamura Y."/>
            <person name="Yuan S."/>
            <person name="Shinozaki K."/>
            <person name="Davis R.W."/>
            <person name="Theologis A."/>
            <person name="Ecker J.R."/>
        </authorList>
    </citation>
    <scope>NUCLEOTIDE SEQUENCE [LARGE SCALE MRNA]</scope>
    <source>
        <strain>cv. Columbia</strain>
    </source>
</reference>
<reference key="6">
    <citation type="submission" date="2002-03" db="EMBL/GenBank/DDBJ databases">
        <title>Full-length cDNA from Arabidopsis thaliana.</title>
        <authorList>
            <person name="Brover V.V."/>
            <person name="Troukhan M.E."/>
            <person name="Alexandrov N.A."/>
            <person name="Lu Y.-P."/>
            <person name="Flavell R.B."/>
            <person name="Feldmann K.A."/>
        </authorList>
    </citation>
    <scope>NUCLEOTIDE SEQUENCE [LARGE SCALE MRNA]</scope>
</reference>
<reference key="7">
    <citation type="submission" date="2006-04" db="EMBL/GenBank/DDBJ databases">
        <title>Phylogenetic relationships in Brassicas and related species based on genomic sequences of delta-12 desaturase.</title>
        <authorList>
            <person name="Zhang J."/>
            <person name="Yang Y."/>
            <person name="Xie Y."/>
            <person name="Huang B."/>
        </authorList>
    </citation>
    <scope>NUCLEOTIDE SEQUENCE [GENOMIC DNA] OF 8-267</scope>
</reference>
<reference key="8">
    <citation type="journal article" date="1992" name="J. Biol. Chem.">
        <title>Arabidopsis mutants deficient in polyunsaturated fatty acid synthesis. Biochemical and genetic characterization of a plant oleoyl-phosphatidylcholine desaturase.</title>
        <authorList>
            <person name="Miquel M."/>
            <person name="Browse J."/>
        </authorList>
    </citation>
    <scope>FUNCTION</scope>
    <scope>CATALYTIC ACTIVITY</scope>
    <scope>SUBCELLULAR LOCATION</scope>
</reference>
<reference key="9">
    <citation type="journal article" date="1996" name="Plant Physiol.">
        <title>Functional expression of the extraplastidial Arabidopsis thaliana oleate desaturase gene (FAD2) in Saccharomyces cerevisiae.</title>
        <authorList>
            <person name="Covello P.S."/>
            <person name="Reed D.W."/>
        </authorList>
    </citation>
    <scope>FUNCTION</scope>
    <scope>CATALYTIC ACTIVITY</scope>
</reference>
<reference key="10">
    <citation type="journal article" date="1998" name="Science">
        <title>Catalytic plasticity of fatty acid modification enzymes underlying chemical diversity of plant lipids.</title>
        <authorList>
            <person name="Broun P."/>
            <person name="Shanklin J."/>
            <person name="Whittle E."/>
            <person name="Somerville C."/>
        </authorList>
    </citation>
    <scope>FUNCTION</scope>
    <scope>MUTAGENESIS OF ALA-63; ALA-104; THR-148; TYR-217; ALA-295; SER-322 AND MET-324</scope>
</reference>
<reference key="11">
    <citation type="journal article" date="2001" name="J. Biol. Chem.">
        <title>Consequences of omega -6-oleate desaturase deficiency on lipid dynamics and functional properties of mitochondrial membranes of Arabidopsis thaliana.</title>
        <authorList>
            <person name="Caiveau O."/>
            <person name="Fortune D."/>
            <person name="Cantrel C."/>
            <person name="Zachowski A."/>
            <person name="Moreau F."/>
        </authorList>
    </citation>
    <scope>FUNCTION</scope>
    <scope>DISRUPTION PHENOTYPE</scope>
</reference>
<reference key="12">
    <citation type="journal article" date="2002" name="J. Biol. Chem.">
        <title>Desaturation and hydroxylation. Residues 148 and 324 of Arabidopsis FAD2, in addition to substrate chain length, exert a major influence in partitioning of catalytic specificity.</title>
        <authorList>
            <person name="Broadwater J.A."/>
            <person name="Whittle E."/>
            <person name="Shanklin J."/>
        </authorList>
    </citation>
    <scope>FUNCTION</scope>
    <scope>MUTAGENESIS OF ALA-104; THR-148; SER-322 AND MET-324</scope>
</reference>
<reference key="13">
    <citation type="journal article" date="2004" name="Plant J.">
        <title>Membrane-bound fatty acid desaturases are inserted co-translationally into the ER and contain different ER retrieval motifs at their carboxy termini.</title>
        <authorList>
            <person name="McCartney A.W."/>
            <person name="Dyer J.M."/>
            <person name="Dhanoa P.K."/>
            <person name="Kim P.K."/>
            <person name="Andrews D.W."/>
            <person name="McNew J.A."/>
            <person name="Mullen R.T."/>
        </authorList>
    </citation>
    <scope>SUBCELLULAR LOCATION</scope>
    <scope>DOMAIN</scope>
</reference>
<reference key="14">
    <citation type="journal article" date="2007" name="Plant Cell Physiol.">
        <title>Alternative oxidase involvement in cold stress response of Arabidopsis thaliana fad2 and FAD3+ cell suspensions altered in membrane lipid composition.</title>
        <authorList>
            <person name="Matos A.R."/>
            <person name="Hourton-Cabassa C."/>
            <person name="Cicek D."/>
            <person name="Reze N."/>
            <person name="Arrabaca J.D."/>
            <person name="Zachowski A."/>
            <person name="Moreau F."/>
        </authorList>
    </citation>
    <scope>FUNCTION</scope>
    <scope>DISRUPTION PHENOTYPE</scope>
</reference>
<reference key="15">
    <citation type="journal article" date="2010" name="Plant J.">
        <title>Mutations of the ER to plastid lipid transporters TGD1, 2, 3 and 4 and the ER oleate desaturase FAD2 suppress the low temperature-induced phenotype of Arabidopsis tocopherol-deficient mutant vte2.</title>
        <authorList>
            <person name="Song W."/>
            <person name="Maeda H."/>
            <person name="DellaPenna D."/>
        </authorList>
    </citation>
    <scope>MUTAGENESIS OF ALA-335</scope>
</reference>
<reference key="16">
    <citation type="journal article" date="2011" name="J. Biol. Chem.">
        <title>Caenorhabditis elegans Delta12-desaturase FAT-2 is a bifunctional desaturase able to desaturate a diverse range of fatty acid substrates at the Delta12 and Delta15 positions.</title>
        <authorList>
            <person name="Zhou X.-R."/>
            <person name="Green A.G."/>
            <person name="Singh S.P."/>
        </authorList>
    </citation>
    <scope>CATALYTIC ACTIVITY</scope>
</reference>
<reference key="17">
    <citation type="journal article" date="2012" name="PLoS ONE">
        <title>Arabidopsis fatty acid desaturase FAD2 is required for salt tolerance during seed germination and early seedling growth.</title>
        <authorList>
            <person name="Zhang J."/>
            <person name="Liu H."/>
            <person name="Sun J."/>
            <person name="Li B."/>
            <person name="Zhu Q."/>
            <person name="Chen S."/>
            <person name="Zhang H."/>
        </authorList>
    </citation>
    <scope>FUNCTION</scope>
    <scope>DISRUPTION PHENOTYPE</scope>
    <scope>TISSUE SPECIFICITY</scope>
    <scope>INDUCTION BY OSMOTIC STRESS</scope>
    <scope>MUTAGENESIS OF ALA-104</scope>
</reference>
<reference key="18">
    <citation type="journal article" date="2014" name="J. Biol. Chem.">
        <title>FAD2 and FAD3 desaturases form heterodimers that facilitate metabolic channeling in vivo.</title>
        <authorList>
            <person name="Lou Y."/>
            <person name="Schwender J."/>
            <person name="Shanklin J."/>
        </authorList>
    </citation>
    <scope>SUBUNIT</scope>
    <scope>INTERACTION WITH FAD3</scope>
</reference>
<feature type="chain" id="PRO_0000185418" description="Delta(12)-fatty-acid desaturase">
    <location>
        <begin position="1"/>
        <end position="383"/>
    </location>
</feature>
<feature type="transmembrane region" description="Helical" evidence="1">
    <location>
        <begin position="56"/>
        <end position="76"/>
    </location>
</feature>
<feature type="transmembrane region" description="Helical" evidence="1">
    <location>
        <begin position="117"/>
        <end position="137"/>
    </location>
</feature>
<feature type="transmembrane region" description="Helical" evidence="1">
    <location>
        <begin position="179"/>
        <end position="199"/>
    </location>
</feature>
<feature type="transmembrane region" description="Helical" evidence="1">
    <location>
        <begin position="225"/>
        <end position="245"/>
    </location>
</feature>
<feature type="transmembrane region" description="Helical" evidence="1">
    <location>
        <begin position="252"/>
        <end position="272"/>
    </location>
</feature>
<feature type="region of interest" description="Disordered" evidence="2">
    <location>
        <begin position="1"/>
        <end position="24"/>
    </location>
</feature>
<feature type="short sequence motif" description="Histidine box-1" evidence="17">
    <location>
        <begin position="105"/>
        <end position="109"/>
    </location>
</feature>
<feature type="short sequence motif" description="Histidine box-2" evidence="17">
    <location>
        <begin position="141"/>
        <end position="145"/>
    </location>
</feature>
<feature type="short sequence motif" description="Histidine box-3" evidence="17">
    <location>
        <begin position="315"/>
        <end position="319"/>
    </location>
</feature>
<feature type="compositionally biased region" description="Basic and acidic residues" evidence="2">
    <location>
        <begin position="14"/>
        <end position="24"/>
    </location>
</feature>
<feature type="mutagenesis site" description="In m7FAD2/L7M; Converted from a desaturase to a bifunctional desaturase/hydroxylase; when associated with G-104; N-148; F-217; V-295; A-322 and I-324." evidence="15">
    <original>A</original>
    <variation>V</variation>
    <location>
        <position position="63"/>
    </location>
</feature>
<feature type="mutagenesis site" description="Produces less than 1% hydroxy fatty acid. In m7FAD2/L7M; Converted from a desaturase to a bifunctional desaturase/hydroxylase; when associated with V-63; N-148; F-217; V-295; A-322 and I-324. In C4M; Converted from a desaturase to a bifunctional desaturase/hydroxylase with a high hydroxylase activity; when associated with I-148; A-322 and V-324." evidence="4 15">
    <original>A</original>
    <variation>G</variation>
    <location>
        <position position="104"/>
    </location>
</feature>
<feature type="mutagenesis site" description="Increased monounsaturated and decreased polyunsaturated fatty acid levels." evidence="11">
    <original>A</original>
    <variation>T</variation>
    <location>
        <position position="104"/>
    </location>
</feature>
<feature type="mutagenesis site" description="Produces up to 4.2% hydroxy fatty acid. In C4M; Converted from a desaturase to a bifunctional desaturase/hydroxylase with a high hydroxylase activity; when associated with G-104; A-322 and V-324." evidence="4">
    <original>T</original>
    <variation>I</variation>
    <location>
        <position position="148"/>
    </location>
</feature>
<feature type="mutagenesis site" description="Produces less than 1% hydroxy fatty acid. In m7FAD2/L7M; Converted from a desaturase to a bifunctional desaturase/hydroxylase; when associated with V-63; G-104; F-217; V-295; A-322 and I-324. In m4FAD2/L4M; Converted from a desaturase to a bifunctional desaturase/hydroxylase; when associated with V-295; A-322 and I-324." evidence="4 15">
    <original>T</original>
    <variation>N</variation>
    <location>
        <position position="148"/>
    </location>
</feature>
<feature type="mutagenesis site" description="In m7FAD2/L7M; Converted from a desaturase to a bifunctional desaturase/hydroxylase; when associated with V-63; G-104; N-148; V-295; A-322 and I-324." evidence="15">
    <original>Y</original>
    <variation>F</variation>
    <location>
        <position position="217"/>
    </location>
</feature>
<feature type="mutagenesis site" description="In m7FAD2/L7M; Converted from a desaturase to a bifunctional desaturase/hydroxylase; when associated with V-63; G-104; N-148; F-217; A-322 and I-324. In m4FAD2/L4M; Converted from a desaturase to a bifunctional desaturase/hydroxylase; when associated with N-148; A-322 and I-324." evidence="15">
    <original>A</original>
    <variation>V</variation>
    <location>
        <position position="295"/>
    </location>
</feature>
<feature type="mutagenesis site" description="Produces less than 1% hydroxy fatty acid. In m7FAD2/L7M; Converted from a desaturase to a bifunctional desaturase/hydroxylase; when associated with V-63; G-104; N-148; F-217; V-295 and I-324. In m4FAD2/L4M; Converted from a desaturase to a bifunctional desaturase/hydroxylase; when associated with N-148; V-295 and I-324. In C4M; Converted from a desaturase to a bifunctional desaturase/hydroxylase with a high hydroxylase activity; when associated with G-104; I-148 and V-324." evidence="4 15">
    <original>S</original>
    <variation>A</variation>
    <location>
        <position position="322"/>
    </location>
</feature>
<feature type="mutagenesis site" description="Produces up to 5.4% hydroxy fatty acid. In m7FAD2/L7M; Converted from a desaturase to a bifunctional desaturase/hydroxylase; when associated with V-63; G-104; N-148; F-217; V-295 and A-322. In m4FAD2/L4M; Converted from a desaturase to a bifunctional desaturase/hydroxylase; when associated with N-148; V-295 and A-322." evidence="4 15">
    <original>M</original>
    <variation>I</variation>
    <location>
        <position position="324"/>
    </location>
</feature>
<feature type="mutagenesis site" description="In C4M; Converted from a desaturase to a bifunctional desaturase/hydroxylase with a high hydroxylase activity; when associated with G-104; I-148 and A-322." evidence="4">
    <original>M</original>
    <variation>V</variation>
    <location>
        <position position="324"/>
    </location>
</feature>
<feature type="mutagenesis site" description="In sve1; Altered fatty acid composition and suppresses the low temperature-induced phenotype of tocopherol-deficient mutant." evidence="9">
    <original>A</original>
    <variation>T</variation>
    <location>
        <position position="335"/>
    </location>
</feature>
<organism>
    <name type="scientific">Arabidopsis thaliana</name>
    <name type="common">Mouse-ear cress</name>
    <dbReference type="NCBI Taxonomy" id="3702"/>
    <lineage>
        <taxon>Eukaryota</taxon>
        <taxon>Viridiplantae</taxon>
        <taxon>Streptophyta</taxon>
        <taxon>Embryophyta</taxon>
        <taxon>Tracheophyta</taxon>
        <taxon>Spermatophyta</taxon>
        <taxon>Magnoliopsida</taxon>
        <taxon>eudicotyledons</taxon>
        <taxon>Gunneridae</taxon>
        <taxon>Pentapetalae</taxon>
        <taxon>rosids</taxon>
        <taxon>malvids</taxon>
        <taxon>Brassicales</taxon>
        <taxon>Brassicaceae</taxon>
        <taxon>Camelineae</taxon>
        <taxon>Arabidopsis</taxon>
    </lineage>
</organism>
<name>FAD6E_ARATH</name>
<proteinExistence type="evidence at protein level"/>
<evidence type="ECO:0000255" key="1"/>
<evidence type="ECO:0000256" key="2">
    <source>
        <dbReference type="SAM" id="MobiDB-lite"/>
    </source>
</evidence>
<evidence type="ECO:0000269" key="3">
    <source>
    </source>
</evidence>
<evidence type="ECO:0000269" key="4">
    <source>
    </source>
</evidence>
<evidence type="ECO:0000269" key="5">
    <source>
    </source>
</evidence>
<evidence type="ECO:0000269" key="6">
    <source>
    </source>
</evidence>
<evidence type="ECO:0000269" key="7">
    <source>
    </source>
</evidence>
<evidence type="ECO:0000269" key="8">
    <source>
    </source>
</evidence>
<evidence type="ECO:0000269" key="9">
    <source>
    </source>
</evidence>
<evidence type="ECO:0000269" key="10">
    <source>
    </source>
</evidence>
<evidence type="ECO:0000269" key="11">
    <source>
    </source>
</evidence>
<evidence type="ECO:0000269" key="12">
    <source>
    </source>
</evidence>
<evidence type="ECO:0000269" key="13">
    <source>
    </source>
</evidence>
<evidence type="ECO:0000269" key="14">
    <source>
    </source>
</evidence>
<evidence type="ECO:0000269" key="15">
    <source>
    </source>
</evidence>
<evidence type="ECO:0000303" key="16">
    <source>
    </source>
</evidence>
<evidence type="ECO:0000305" key="17"/>
<evidence type="ECO:0000305" key="18">
    <source>
    </source>
</evidence>
<evidence type="ECO:0000312" key="19">
    <source>
        <dbReference type="Araport" id="AT3G12120"/>
    </source>
</evidence>
<evidence type="ECO:0000312" key="20">
    <source>
        <dbReference type="EMBL" id="AAG51042.1"/>
    </source>
</evidence>
<evidence type="ECO:0000312" key="21">
    <source>
        <dbReference type="EMBL" id="BAB01960.1"/>
    </source>
</evidence>
<accession>P46313</accession>
<accession>Q19MZ0</accession>
<accession>Q8LFZ8</accession>
<gene>
    <name evidence="16" type="primary">FAD2</name>
    <name evidence="19" type="ordered locus">At3g12120</name>
    <name evidence="20" type="ORF">T21B14.6</name>
    <name type="ORF">T21B14_107</name>
    <name evidence="21" type="ORF">T23B7.6</name>
</gene>
<keyword id="KW-0256">Endoplasmic reticulum</keyword>
<keyword id="KW-0275">Fatty acid biosynthesis</keyword>
<keyword id="KW-0276">Fatty acid metabolism</keyword>
<keyword id="KW-0444">Lipid biosynthesis</keyword>
<keyword id="KW-0443">Lipid metabolism</keyword>
<keyword id="KW-0472">Membrane</keyword>
<keyword id="KW-0492">Microsome</keyword>
<keyword id="KW-0560">Oxidoreductase</keyword>
<keyword id="KW-1185">Reference proteome</keyword>
<keyword id="KW-0812">Transmembrane</keyword>
<keyword id="KW-1133">Transmembrane helix</keyword>
<sequence length="383" mass="44048">MGAGGRMPVPTSSKKSETDTTKRVPCEKPPFSVGDLKKAIPPHCFKRSIPRSFSYLISDIIIASCFYYVATNYFSLLPQPLSYLAWPLYWACQGCVLTGIWVIAHECGHHAFSDYQWLDDTVGLIFHSFLLVPYFSWKYSHRRHHSNTGSLERDEVFVPKQKSAIKWYGKYLNNPLGRIMMLTVQFVLGWPLYLAFNVSGRPYDGFACHFFPNAPIYNDRERLQIYLSDAGILAVCFGLYRYAAAQGMASMICLYGVPLLIVNAFLVLITYLQHTHPSLPHYDSSEWDWLRGALATVDRDYGILNKVFHNITDTHVAHHLFSTMPHYNAMEATKAIKPILGDYYQFDGTPWYVAMYREAKECIYVEPDREGDKKGVYWYNNKL</sequence>